<feature type="chain" id="PRO_0000387886" description="4-hydroxy-2-oxovalerate aldolase 2">
    <location>
        <begin position="1"/>
        <end position="354"/>
    </location>
</feature>
<feature type="domain" description="Pyruvate carboxyltransferase" evidence="1">
    <location>
        <begin position="9"/>
        <end position="261"/>
    </location>
</feature>
<feature type="active site" description="Proton acceptor" evidence="1">
    <location>
        <position position="21"/>
    </location>
</feature>
<feature type="binding site" evidence="1">
    <location>
        <begin position="17"/>
        <end position="18"/>
    </location>
    <ligand>
        <name>substrate</name>
    </ligand>
</feature>
<feature type="binding site" evidence="1">
    <location>
        <position position="18"/>
    </location>
    <ligand>
        <name>Mn(2+)</name>
        <dbReference type="ChEBI" id="CHEBI:29035"/>
    </ligand>
</feature>
<feature type="binding site" evidence="1">
    <location>
        <position position="171"/>
    </location>
    <ligand>
        <name>substrate</name>
    </ligand>
</feature>
<feature type="binding site" evidence="1">
    <location>
        <position position="200"/>
    </location>
    <ligand>
        <name>Mn(2+)</name>
        <dbReference type="ChEBI" id="CHEBI:29035"/>
    </ligand>
</feature>
<feature type="binding site" evidence="1">
    <location>
        <position position="200"/>
    </location>
    <ligand>
        <name>substrate</name>
    </ligand>
</feature>
<feature type="binding site" evidence="1">
    <location>
        <position position="202"/>
    </location>
    <ligand>
        <name>Mn(2+)</name>
        <dbReference type="ChEBI" id="CHEBI:29035"/>
    </ligand>
</feature>
<feature type="binding site" evidence="1">
    <location>
        <position position="291"/>
    </location>
    <ligand>
        <name>substrate</name>
    </ligand>
</feature>
<feature type="site" description="Transition state stabilizer" evidence="1">
    <location>
        <position position="17"/>
    </location>
</feature>
<name>HOA2_CUPNH</name>
<dbReference type="EC" id="4.1.3.39" evidence="1"/>
<dbReference type="EMBL" id="AM260480">
    <property type="protein sequence ID" value="CAJ95349.1"/>
    <property type="molecule type" value="Genomic_DNA"/>
</dbReference>
<dbReference type="RefSeq" id="WP_011616673.1">
    <property type="nucleotide sequence ID" value="NC_008314.1"/>
</dbReference>
<dbReference type="SMR" id="Q0K3S5"/>
<dbReference type="STRING" id="381666.H16_B0552"/>
<dbReference type="KEGG" id="reh:H16_B0552"/>
<dbReference type="eggNOG" id="COG0119">
    <property type="taxonomic scope" value="Bacteria"/>
</dbReference>
<dbReference type="HOGENOM" id="CLU_049173_0_0_4"/>
<dbReference type="OrthoDB" id="9803573at2"/>
<dbReference type="Proteomes" id="UP000008210">
    <property type="component" value="Chromosome 2"/>
</dbReference>
<dbReference type="GO" id="GO:0003852">
    <property type="term" value="F:2-isopropylmalate synthase activity"/>
    <property type="evidence" value="ECO:0007669"/>
    <property type="project" value="TreeGrafter"/>
</dbReference>
<dbReference type="GO" id="GO:0008701">
    <property type="term" value="F:4-hydroxy-2-oxovalerate aldolase activity"/>
    <property type="evidence" value="ECO:0007669"/>
    <property type="project" value="UniProtKB-UniRule"/>
</dbReference>
<dbReference type="GO" id="GO:0030145">
    <property type="term" value="F:manganese ion binding"/>
    <property type="evidence" value="ECO:0007669"/>
    <property type="project" value="UniProtKB-UniRule"/>
</dbReference>
<dbReference type="GO" id="GO:0009056">
    <property type="term" value="P:catabolic process"/>
    <property type="evidence" value="ECO:0007669"/>
    <property type="project" value="UniProtKB-KW"/>
</dbReference>
<dbReference type="GO" id="GO:0009098">
    <property type="term" value="P:L-leucine biosynthetic process"/>
    <property type="evidence" value="ECO:0007669"/>
    <property type="project" value="TreeGrafter"/>
</dbReference>
<dbReference type="CDD" id="cd07943">
    <property type="entry name" value="DRE_TIM_HOA"/>
    <property type="match status" value="1"/>
</dbReference>
<dbReference type="FunFam" id="1.10.8.60:FF:000042">
    <property type="entry name" value="4-hydroxy-2-oxovalerate aldolase"/>
    <property type="match status" value="1"/>
</dbReference>
<dbReference type="FunFam" id="3.20.20.70:FF:000072">
    <property type="entry name" value="4-hydroxy-2-oxovalerate aldolase"/>
    <property type="match status" value="1"/>
</dbReference>
<dbReference type="Gene3D" id="1.10.8.60">
    <property type="match status" value="1"/>
</dbReference>
<dbReference type="Gene3D" id="3.20.20.70">
    <property type="entry name" value="Aldolase class I"/>
    <property type="match status" value="1"/>
</dbReference>
<dbReference type="HAMAP" id="MF_01656">
    <property type="entry name" value="HOA"/>
    <property type="match status" value="1"/>
</dbReference>
<dbReference type="InterPro" id="IPR050073">
    <property type="entry name" value="2-IPM_HCS-like"/>
</dbReference>
<dbReference type="InterPro" id="IPR017629">
    <property type="entry name" value="4OH_2_O-val_aldolase"/>
</dbReference>
<dbReference type="InterPro" id="IPR013785">
    <property type="entry name" value="Aldolase_TIM"/>
</dbReference>
<dbReference type="InterPro" id="IPR012425">
    <property type="entry name" value="DmpG_comm"/>
</dbReference>
<dbReference type="InterPro" id="IPR035685">
    <property type="entry name" value="DRE_TIM_HOA"/>
</dbReference>
<dbReference type="InterPro" id="IPR000891">
    <property type="entry name" value="PYR_CT"/>
</dbReference>
<dbReference type="NCBIfam" id="TIGR03217">
    <property type="entry name" value="4OH_2_O_val_ald"/>
    <property type="match status" value="1"/>
</dbReference>
<dbReference type="NCBIfam" id="NF006049">
    <property type="entry name" value="PRK08195.1"/>
    <property type="match status" value="1"/>
</dbReference>
<dbReference type="PANTHER" id="PTHR10277:SF9">
    <property type="entry name" value="2-ISOPROPYLMALATE SYNTHASE 1, CHLOROPLASTIC-RELATED"/>
    <property type="match status" value="1"/>
</dbReference>
<dbReference type="PANTHER" id="PTHR10277">
    <property type="entry name" value="HOMOCITRATE SYNTHASE-RELATED"/>
    <property type="match status" value="1"/>
</dbReference>
<dbReference type="Pfam" id="PF07836">
    <property type="entry name" value="DmpG_comm"/>
    <property type="match status" value="1"/>
</dbReference>
<dbReference type="Pfam" id="PF00682">
    <property type="entry name" value="HMGL-like"/>
    <property type="match status" value="1"/>
</dbReference>
<dbReference type="SUPFAM" id="SSF51569">
    <property type="entry name" value="Aldolase"/>
    <property type="match status" value="1"/>
</dbReference>
<dbReference type="SUPFAM" id="SSF89000">
    <property type="entry name" value="post-HMGL domain-like"/>
    <property type="match status" value="1"/>
</dbReference>
<dbReference type="PROSITE" id="PS50991">
    <property type="entry name" value="PYR_CT"/>
    <property type="match status" value="1"/>
</dbReference>
<organism>
    <name type="scientific">Cupriavidus necator (strain ATCC 17699 / DSM 428 / KCTC 22496 / NCIMB 10442 / H16 / Stanier 337)</name>
    <name type="common">Ralstonia eutropha</name>
    <dbReference type="NCBI Taxonomy" id="381666"/>
    <lineage>
        <taxon>Bacteria</taxon>
        <taxon>Pseudomonadati</taxon>
        <taxon>Pseudomonadota</taxon>
        <taxon>Betaproteobacteria</taxon>
        <taxon>Burkholderiales</taxon>
        <taxon>Burkholderiaceae</taxon>
        <taxon>Cupriavidus</taxon>
    </lineage>
</organism>
<comment type="catalytic activity">
    <reaction evidence="1">
        <text>(S)-4-hydroxy-2-oxopentanoate = acetaldehyde + pyruvate</text>
        <dbReference type="Rhea" id="RHEA:22624"/>
        <dbReference type="ChEBI" id="CHEBI:15343"/>
        <dbReference type="ChEBI" id="CHEBI:15361"/>
        <dbReference type="ChEBI" id="CHEBI:73143"/>
        <dbReference type="EC" id="4.1.3.39"/>
    </reaction>
</comment>
<comment type="similarity">
    <text evidence="1">Belongs to the 4-hydroxy-2-oxovalerate aldolase family.</text>
</comment>
<protein>
    <recommendedName>
        <fullName evidence="1">4-hydroxy-2-oxovalerate aldolase 2</fullName>
        <shortName evidence="1">HOA 2</shortName>
        <ecNumber evidence="1">4.1.3.39</ecNumber>
    </recommendedName>
    <alternativeName>
        <fullName evidence="1">4-hydroxy-2-keto-pentanoic acid aldolase 2</fullName>
    </alternativeName>
    <alternativeName>
        <fullName evidence="1">4-hydroxy-2-oxopentanoate aldolase 2</fullName>
    </alternativeName>
</protein>
<keyword id="KW-0058">Aromatic hydrocarbons catabolism</keyword>
<keyword id="KW-0456">Lyase</keyword>
<keyword id="KW-0464">Manganese</keyword>
<keyword id="KW-0479">Metal-binding</keyword>
<keyword id="KW-1185">Reference proteome</keyword>
<reference key="1">
    <citation type="journal article" date="2006" name="Nat. Biotechnol.">
        <title>Genome sequence of the bioplastic-producing 'Knallgas' bacterium Ralstonia eutropha H16.</title>
        <authorList>
            <person name="Pohlmann A."/>
            <person name="Fricke W.F."/>
            <person name="Reinecke F."/>
            <person name="Kusian B."/>
            <person name="Liesegang H."/>
            <person name="Cramm R."/>
            <person name="Eitinger T."/>
            <person name="Ewering C."/>
            <person name="Poetter M."/>
            <person name="Schwartz E."/>
            <person name="Strittmatter A."/>
            <person name="Voss I."/>
            <person name="Gottschalk G."/>
            <person name="Steinbuechel A."/>
            <person name="Friedrich B."/>
            <person name="Bowien B."/>
        </authorList>
    </citation>
    <scope>NUCLEOTIDE SEQUENCE [LARGE SCALE GENOMIC DNA]</scope>
    <source>
        <strain>ATCC 17699 / DSM 428 / KCTC 22496 / NCIMB 10442 / H16 / Stanier 337</strain>
    </source>
</reference>
<sequence length="354" mass="37957">MTAQPTKKLYISDVTLRDGSHAIRHQYSLEHVRRIAAALDAARVDSIEVAHGDGLSGSSFNYGFGAHTDLEWIAAVAETVRHARVATLLLPGVGTLHDLRAAYDAGARVVRVATHCTEADVSRQHIEYARELGMDTVGFLMMSHMTTPAALAQQAKLMESYGAQCVYVVDSGGALGMQDVRERFRAFKDVLRPETQTGMHAHHNLSLGVANSIVAVEEGCDRVDASLAGMGAGAGNAPLEVFIAAAERLGWQHGCDLYTLMDAADDIVRPLQDRPVRVDRETLALGYAGVYSSFLRHAEAAAARYGLGTVDILVELGRRRMVGGQEDMIVDVALDLLARRSAQAGQAVPSAAVA</sequence>
<accession>Q0K3S5</accession>
<evidence type="ECO:0000255" key="1">
    <source>
        <dbReference type="HAMAP-Rule" id="MF_01656"/>
    </source>
</evidence>
<gene>
    <name type="ordered locus">H16_B0552</name>
</gene>
<proteinExistence type="inferred from homology"/>